<protein>
    <recommendedName>
        <fullName evidence="1">Acetylglutamate kinase</fullName>
        <ecNumber evidence="1">2.7.2.8</ecNumber>
    </recommendedName>
    <alternativeName>
        <fullName evidence="1">N-acetyl-L-glutamate 5-phosphotransferase</fullName>
    </alternativeName>
    <alternativeName>
        <fullName evidence="1">NAG kinase</fullName>
        <shortName evidence="1">NAGK</shortName>
    </alternativeName>
</protein>
<name>ARGB_BACAN</name>
<proteinExistence type="inferred from homology"/>
<accession>Q81M97</accession>
<accession>Q6HTQ0</accession>
<accession>Q6KMY9</accession>
<organism>
    <name type="scientific">Bacillus anthracis</name>
    <dbReference type="NCBI Taxonomy" id="1392"/>
    <lineage>
        <taxon>Bacteria</taxon>
        <taxon>Bacillati</taxon>
        <taxon>Bacillota</taxon>
        <taxon>Bacilli</taxon>
        <taxon>Bacillales</taxon>
        <taxon>Bacillaceae</taxon>
        <taxon>Bacillus</taxon>
        <taxon>Bacillus cereus group</taxon>
    </lineage>
</organism>
<dbReference type="EC" id="2.7.2.8" evidence="1"/>
<dbReference type="EMBL" id="AE016879">
    <property type="protein sequence ID" value="AAP28071.1"/>
    <property type="molecule type" value="Genomic_DNA"/>
</dbReference>
<dbReference type="EMBL" id="AE017334">
    <property type="protein sequence ID" value="AAT33473.1"/>
    <property type="molecule type" value="Genomic_DNA"/>
</dbReference>
<dbReference type="EMBL" id="AE017225">
    <property type="protein sequence ID" value="AAT56339.1"/>
    <property type="molecule type" value="Genomic_DNA"/>
</dbReference>
<dbReference type="RefSeq" id="NP_846585.1">
    <property type="nucleotide sequence ID" value="NC_003997.3"/>
</dbReference>
<dbReference type="RefSeq" id="WP_001000908.1">
    <property type="nucleotide sequence ID" value="NZ_WXXJ01000027.1"/>
</dbReference>
<dbReference type="RefSeq" id="YP_030288.1">
    <property type="nucleotide sequence ID" value="NC_005945.1"/>
</dbReference>
<dbReference type="SMR" id="Q81M97"/>
<dbReference type="STRING" id="261594.GBAA_4353"/>
<dbReference type="DNASU" id="1087577"/>
<dbReference type="GeneID" id="45024018"/>
<dbReference type="KEGG" id="ban:BA_4353"/>
<dbReference type="KEGG" id="bar:GBAA_4353"/>
<dbReference type="KEGG" id="bat:BAS4038"/>
<dbReference type="PATRIC" id="fig|198094.11.peg.4321"/>
<dbReference type="eggNOG" id="COG0548">
    <property type="taxonomic scope" value="Bacteria"/>
</dbReference>
<dbReference type="HOGENOM" id="CLU_053680_0_0_9"/>
<dbReference type="OMA" id="EGLYEDW"/>
<dbReference type="OrthoDB" id="9803155at2"/>
<dbReference type="UniPathway" id="UPA00068">
    <property type="reaction ID" value="UER00107"/>
</dbReference>
<dbReference type="Proteomes" id="UP000000427">
    <property type="component" value="Chromosome"/>
</dbReference>
<dbReference type="Proteomes" id="UP000000594">
    <property type="component" value="Chromosome"/>
</dbReference>
<dbReference type="GO" id="GO:0005737">
    <property type="term" value="C:cytoplasm"/>
    <property type="evidence" value="ECO:0007669"/>
    <property type="project" value="UniProtKB-SubCell"/>
</dbReference>
<dbReference type="GO" id="GO:0003991">
    <property type="term" value="F:acetylglutamate kinase activity"/>
    <property type="evidence" value="ECO:0007669"/>
    <property type="project" value="UniProtKB-UniRule"/>
</dbReference>
<dbReference type="GO" id="GO:0005524">
    <property type="term" value="F:ATP binding"/>
    <property type="evidence" value="ECO:0007669"/>
    <property type="project" value="UniProtKB-UniRule"/>
</dbReference>
<dbReference type="GO" id="GO:0042450">
    <property type="term" value="P:arginine biosynthetic process via ornithine"/>
    <property type="evidence" value="ECO:0007669"/>
    <property type="project" value="UniProtKB-UniRule"/>
</dbReference>
<dbReference type="GO" id="GO:0006526">
    <property type="term" value="P:L-arginine biosynthetic process"/>
    <property type="evidence" value="ECO:0007669"/>
    <property type="project" value="UniProtKB-UniPathway"/>
</dbReference>
<dbReference type="CDD" id="cd04238">
    <property type="entry name" value="AAK_NAGK-like"/>
    <property type="match status" value="1"/>
</dbReference>
<dbReference type="FunFam" id="3.40.1160.10:FF:000004">
    <property type="entry name" value="Acetylglutamate kinase"/>
    <property type="match status" value="1"/>
</dbReference>
<dbReference type="Gene3D" id="3.40.1160.10">
    <property type="entry name" value="Acetylglutamate kinase-like"/>
    <property type="match status" value="1"/>
</dbReference>
<dbReference type="HAMAP" id="MF_00082">
    <property type="entry name" value="ArgB"/>
    <property type="match status" value="1"/>
</dbReference>
<dbReference type="InterPro" id="IPR036393">
    <property type="entry name" value="AceGlu_kinase-like_sf"/>
</dbReference>
<dbReference type="InterPro" id="IPR004662">
    <property type="entry name" value="AcgluKinase_fam"/>
</dbReference>
<dbReference type="InterPro" id="IPR037528">
    <property type="entry name" value="ArgB"/>
</dbReference>
<dbReference type="InterPro" id="IPR001048">
    <property type="entry name" value="Asp/Glu/Uridylate_kinase"/>
</dbReference>
<dbReference type="NCBIfam" id="TIGR00761">
    <property type="entry name" value="argB"/>
    <property type="match status" value="1"/>
</dbReference>
<dbReference type="PANTHER" id="PTHR23342">
    <property type="entry name" value="N-ACETYLGLUTAMATE SYNTHASE"/>
    <property type="match status" value="1"/>
</dbReference>
<dbReference type="PANTHER" id="PTHR23342:SF0">
    <property type="entry name" value="N-ACETYLGLUTAMATE SYNTHASE, MITOCHONDRIAL"/>
    <property type="match status" value="1"/>
</dbReference>
<dbReference type="Pfam" id="PF00696">
    <property type="entry name" value="AA_kinase"/>
    <property type="match status" value="1"/>
</dbReference>
<dbReference type="PIRSF" id="PIRSF000728">
    <property type="entry name" value="NAGK"/>
    <property type="match status" value="1"/>
</dbReference>
<dbReference type="SUPFAM" id="SSF53633">
    <property type="entry name" value="Carbamate kinase-like"/>
    <property type="match status" value="1"/>
</dbReference>
<evidence type="ECO:0000255" key="1">
    <source>
        <dbReference type="HAMAP-Rule" id="MF_00082"/>
    </source>
</evidence>
<feature type="chain" id="PRO_0000112577" description="Acetylglutamate kinase">
    <location>
        <begin position="1"/>
        <end position="255"/>
    </location>
</feature>
<feature type="binding site" evidence="1">
    <location>
        <begin position="40"/>
        <end position="41"/>
    </location>
    <ligand>
        <name>substrate</name>
    </ligand>
</feature>
<feature type="binding site" evidence="1">
    <location>
        <position position="62"/>
    </location>
    <ligand>
        <name>substrate</name>
    </ligand>
</feature>
<feature type="binding site" evidence="1">
    <location>
        <position position="153"/>
    </location>
    <ligand>
        <name>substrate</name>
    </ligand>
</feature>
<feature type="site" description="Transition state stabilizer" evidence="1">
    <location>
        <position position="8"/>
    </location>
</feature>
<feature type="site" description="Transition state stabilizer" evidence="1">
    <location>
        <position position="212"/>
    </location>
</feature>
<comment type="function">
    <text evidence="1">Catalyzes the ATP-dependent phosphorylation of N-acetyl-L-glutamate.</text>
</comment>
<comment type="catalytic activity">
    <reaction evidence="1">
        <text>N-acetyl-L-glutamate + ATP = N-acetyl-L-glutamyl 5-phosphate + ADP</text>
        <dbReference type="Rhea" id="RHEA:14629"/>
        <dbReference type="ChEBI" id="CHEBI:30616"/>
        <dbReference type="ChEBI" id="CHEBI:44337"/>
        <dbReference type="ChEBI" id="CHEBI:57936"/>
        <dbReference type="ChEBI" id="CHEBI:456216"/>
        <dbReference type="EC" id="2.7.2.8"/>
    </reaction>
</comment>
<comment type="pathway">
    <text evidence="1">Amino-acid biosynthesis; L-arginine biosynthesis; N(2)-acetyl-L-ornithine from L-glutamate: step 2/4.</text>
</comment>
<comment type="subcellular location">
    <subcellularLocation>
        <location evidence="1">Cytoplasm</location>
    </subcellularLocation>
</comment>
<comment type="similarity">
    <text evidence="1">Belongs to the acetylglutamate kinase family. ArgB subfamily.</text>
</comment>
<gene>
    <name evidence="1" type="primary">argB</name>
    <name type="ordered locus">BA_4353</name>
    <name type="ordered locus">GBAA_4353</name>
    <name type="ordered locus">BAS4038</name>
</gene>
<reference key="1">
    <citation type="journal article" date="2003" name="Nature">
        <title>The genome sequence of Bacillus anthracis Ames and comparison to closely related bacteria.</title>
        <authorList>
            <person name="Read T.D."/>
            <person name="Peterson S.N."/>
            <person name="Tourasse N.J."/>
            <person name="Baillie L.W."/>
            <person name="Paulsen I.T."/>
            <person name="Nelson K.E."/>
            <person name="Tettelin H."/>
            <person name="Fouts D.E."/>
            <person name="Eisen J.A."/>
            <person name="Gill S.R."/>
            <person name="Holtzapple E.K."/>
            <person name="Okstad O.A."/>
            <person name="Helgason E."/>
            <person name="Rilstone J."/>
            <person name="Wu M."/>
            <person name="Kolonay J.F."/>
            <person name="Beanan M.J."/>
            <person name="Dodson R.J."/>
            <person name="Brinkac L.M."/>
            <person name="Gwinn M.L."/>
            <person name="DeBoy R.T."/>
            <person name="Madpu R."/>
            <person name="Daugherty S.C."/>
            <person name="Durkin A.S."/>
            <person name="Haft D.H."/>
            <person name="Nelson W.C."/>
            <person name="Peterson J.D."/>
            <person name="Pop M."/>
            <person name="Khouri H.M."/>
            <person name="Radune D."/>
            <person name="Benton J.L."/>
            <person name="Mahamoud Y."/>
            <person name="Jiang L."/>
            <person name="Hance I.R."/>
            <person name="Weidman J.F."/>
            <person name="Berry K.J."/>
            <person name="Plaut R.D."/>
            <person name="Wolf A.M."/>
            <person name="Watkins K.L."/>
            <person name="Nierman W.C."/>
            <person name="Hazen A."/>
            <person name="Cline R.T."/>
            <person name="Redmond C."/>
            <person name="Thwaite J.E."/>
            <person name="White O."/>
            <person name="Salzberg S.L."/>
            <person name="Thomason B."/>
            <person name="Friedlander A.M."/>
            <person name="Koehler T.M."/>
            <person name="Hanna P.C."/>
            <person name="Kolstoe A.-B."/>
            <person name="Fraser C.M."/>
        </authorList>
    </citation>
    <scope>NUCLEOTIDE SEQUENCE [LARGE SCALE GENOMIC DNA]</scope>
    <source>
        <strain>Ames / isolate Porton</strain>
    </source>
</reference>
<reference key="2">
    <citation type="journal article" date="2009" name="J. Bacteriol.">
        <title>The complete genome sequence of Bacillus anthracis Ames 'Ancestor'.</title>
        <authorList>
            <person name="Ravel J."/>
            <person name="Jiang L."/>
            <person name="Stanley S.T."/>
            <person name="Wilson M.R."/>
            <person name="Decker R.S."/>
            <person name="Read T.D."/>
            <person name="Worsham P."/>
            <person name="Keim P.S."/>
            <person name="Salzberg S.L."/>
            <person name="Fraser-Liggett C.M."/>
            <person name="Rasko D.A."/>
        </authorList>
    </citation>
    <scope>NUCLEOTIDE SEQUENCE [LARGE SCALE GENOMIC DNA]</scope>
    <source>
        <strain>Ames ancestor</strain>
    </source>
</reference>
<reference key="3">
    <citation type="submission" date="2004-01" db="EMBL/GenBank/DDBJ databases">
        <title>Complete genome sequence of Bacillus anthracis Sterne.</title>
        <authorList>
            <person name="Brettin T.S."/>
            <person name="Bruce D."/>
            <person name="Challacombe J.F."/>
            <person name="Gilna P."/>
            <person name="Han C."/>
            <person name="Hill K."/>
            <person name="Hitchcock P."/>
            <person name="Jackson P."/>
            <person name="Keim P."/>
            <person name="Longmire J."/>
            <person name="Lucas S."/>
            <person name="Okinaka R."/>
            <person name="Richardson P."/>
            <person name="Rubin E."/>
            <person name="Tice H."/>
        </authorList>
    </citation>
    <scope>NUCLEOTIDE SEQUENCE [LARGE SCALE GENOMIC DNA]</scope>
    <source>
        <strain>Sterne</strain>
    </source>
</reference>
<sequence>MNDYIVVKCGGSMLEQLNDVFFDCIKKLQQQYKVVIVHGGGPEIDAKLKDCNINVEKRDGLRVTPKEVMDVVQMVLCGSTNKKFVMNLQKHNLLAVGCSGCDGKLLQVQPVSEEIGYVGEVSYVETALLKGLINMNYIPVIAPIGIHDNEIYNINADTAAAGIAAALSAKELILITDVDGILHEGKLVKKTDESEIATLIEKGVITGGMIPKVQAALASLKMGVQKISIVNGTKDFTEDTGECIGMTVTRGVSIV</sequence>
<keyword id="KW-0028">Amino-acid biosynthesis</keyword>
<keyword id="KW-0055">Arginine biosynthesis</keyword>
<keyword id="KW-0067">ATP-binding</keyword>
<keyword id="KW-0963">Cytoplasm</keyword>
<keyword id="KW-0418">Kinase</keyword>
<keyword id="KW-0547">Nucleotide-binding</keyword>
<keyword id="KW-1185">Reference proteome</keyword>
<keyword id="KW-0808">Transferase</keyword>